<feature type="chain" id="PRO_1000137146" description="DNA polymerase IV">
    <location>
        <begin position="1"/>
        <end position="354"/>
    </location>
</feature>
<feature type="domain" description="UmuC" evidence="1">
    <location>
        <begin position="7"/>
        <end position="188"/>
    </location>
</feature>
<feature type="active site" evidence="1">
    <location>
        <position position="107"/>
    </location>
</feature>
<feature type="binding site" evidence="1">
    <location>
        <position position="11"/>
    </location>
    <ligand>
        <name>Mg(2+)</name>
        <dbReference type="ChEBI" id="CHEBI:18420"/>
    </ligand>
</feature>
<feature type="binding site" evidence="1">
    <location>
        <position position="106"/>
    </location>
    <ligand>
        <name>Mg(2+)</name>
        <dbReference type="ChEBI" id="CHEBI:18420"/>
    </ligand>
</feature>
<feature type="site" description="Substrate discrimination" evidence="1">
    <location>
        <position position="16"/>
    </location>
</feature>
<reference key="1">
    <citation type="submission" date="2008-05" db="EMBL/GenBank/DDBJ databases">
        <title>Complete sequence of Shigella boydii serotype 18 strain BS512.</title>
        <authorList>
            <person name="Rasko D.A."/>
            <person name="Rosovitz M."/>
            <person name="Maurelli A.T."/>
            <person name="Myers G."/>
            <person name="Seshadri R."/>
            <person name="Cer R."/>
            <person name="Jiang L."/>
            <person name="Ravel J."/>
            <person name="Sebastian Y."/>
        </authorList>
    </citation>
    <scope>NUCLEOTIDE SEQUENCE [LARGE SCALE GENOMIC DNA]</scope>
    <source>
        <strain>CDC 3083-94 / BS512</strain>
    </source>
</reference>
<proteinExistence type="inferred from homology"/>
<name>DPO4_SHIB3</name>
<protein>
    <recommendedName>
        <fullName evidence="1">DNA polymerase IV</fullName>
        <shortName evidence="1">Pol IV</shortName>
        <ecNumber evidence="1">2.7.7.7</ecNumber>
    </recommendedName>
</protein>
<sequence length="354" mass="39878">MYKKVKIIHVDMDCFFAAVEMRDNPALRDIPIAIGGSRERRGVISTANYPARKFGVRSAMPTGMALKLCPHLTLLPGRFDAYKEASNHIREIFSRYTSRIEPLSLDEAYLDVTDSVHCHGSATLIAQEIRQTIFNELQLTASAGVAPVKFLAKIASDMNKPNGQFVITPAEVPAFLQTLPLAKIPGVGKVSAAKLEAMGLRTCGDVQKCDLVMLLKRFGKFGRILWERSQGIDERDVNSERLRKSVGVERTMAEDIHHWSECEAIIERLYPELERRLAKVKPDLLIARQGVKLKFDDFQQTTQEHVWPRLNKADLIATARKTWDERRGGRGVRLVGLHVTLLDPQMERQLVLGL</sequence>
<dbReference type="EC" id="2.7.7.7" evidence="1"/>
<dbReference type="EMBL" id="CP001063">
    <property type="protein sequence ID" value="ACD09649.1"/>
    <property type="molecule type" value="Genomic_DNA"/>
</dbReference>
<dbReference type="SMR" id="B2U3S3"/>
<dbReference type="STRING" id="344609.SbBS512_E0228"/>
<dbReference type="KEGG" id="sbc:SbBS512_E0228"/>
<dbReference type="HOGENOM" id="CLU_012348_1_2_6"/>
<dbReference type="Proteomes" id="UP000001030">
    <property type="component" value="Chromosome"/>
</dbReference>
<dbReference type="GO" id="GO:0005829">
    <property type="term" value="C:cytosol"/>
    <property type="evidence" value="ECO:0007669"/>
    <property type="project" value="TreeGrafter"/>
</dbReference>
<dbReference type="GO" id="GO:0003684">
    <property type="term" value="F:damaged DNA binding"/>
    <property type="evidence" value="ECO:0007669"/>
    <property type="project" value="InterPro"/>
</dbReference>
<dbReference type="GO" id="GO:0003887">
    <property type="term" value="F:DNA-directed DNA polymerase activity"/>
    <property type="evidence" value="ECO:0007669"/>
    <property type="project" value="UniProtKB-UniRule"/>
</dbReference>
<dbReference type="GO" id="GO:0000287">
    <property type="term" value="F:magnesium ion binding"/>
    <property type="evidence" value="ECO:0007669"/>
    <property type="project" value="UniProtKB-UniRule"/>
</dbReference>
<dbReference type="GO" id="GO:0006261">
    <property type="term" value="P:DNA-templated DNA replication"/>
    <property type="evidence" value="ECO:0007669"/>
    <property type="project" value="UniProtKB-UniRule"/>
</dbReference>
<dbReference type="GO" id="GO:0042276">
    <property type="term" value="P:error-prone translesion synthesis"/>
    <property type="evidence" value="ECO:0007669"/>
    <property type="project" value="TreeGrafter"/>
</dbReference>
<dbReference type="GO" id="GO:0009432">
    <property type="term" value="P:SOS response"/>
    <property type="evidence" value="ECO:0007669"/>
    <property type="project" value="TreeGrafter"/>
</dbReference>
<dbReference type="CDD" id="cd03586">
    <property type="entry name" value="PolY_Pol_IV_kappa"/>
    <property type="match status" value="1"/>
</dbReference>
<dbReference type="FunFam" id="1.10.150.20:FF:000019">
    <property type="entry name" value="DNA polymerase IV"/>
    <property type="match status" value="1"/>
</dbReference>
<dbReference type="FunFam" id="3.30.1490.100:FF:000002">
    <property type="entry name" value="DNA polymerase IV"/>
    <property type="match status" value="1"/>
</dbReference>
<dbReference type="FunFam" id="3.30.70.270:FF:000002">
    <property type="entry name" value="DNA polymerase IV"/>
    <property type="match status" value="1"/>
</dbReference>
<dbReference type="FunFam" id="3.40.1170.60:FF:000001">
    <property type="entry name" value="DNA polymerase IV"/>
    <property type="match status" value="1"/>
</dbReference>
<dbReference type="Gene3D" id="3.30.70.270">
    <property type="match status" value="1"/>
</dbReference>
<dbReference type="Gene3D" id="3.40.1170.60">
    <property type="match status" value="1"/>
</dbReference>
<dbReference type="Gene3D" id="1.10.150.20">
    <property type="entry name" value="5' to 3' exonuclease, C-terminal subdomain"/>
    <property type="match status" value="1"/>
</dbReference>
<dbReference type="Gene3D" id="3.30.1490.100">
    <property type="entry name" value="DNA polymerase, Y-family, little finger domain"/>
    <property type="match status" value="1"/>
</dbReference>
<dbReference type="HAMAP" id="MF_01113">
    <property type="entry name" value="DNApol_IV"/>
    <property type="match status" value="1"/>
</dbReference>
<dbReference type="InterPro" id="IPR043502">
    <property type="entry name" value="DNA/RNA_pol_sf"/>
</dbReference>
<dbReference type="InterPro" id="IPR036775">
    <property type="entry name" value="DNA_pol_Y-fam_lit_finger_sf"/>
</dbReference>
<dbReference type="InterPro" id="IPR017961">
    <property type="entry name" value="DNA_pol_Y-fam_little_finger"/>
</dbReference>
<dbReference type="InterPro" id="IPR050116">
    <property type="entry name" value="DNA_polymerase-Y"/>
</dbReference>
<dbReference type="InterPro" id="IPR022880">
    <property type="entry name" value="DNApol_IV"/>
</dbReference>
<dbReference type="InterPro" id="IPR053848">
    <property type="entry name" value="IMS_HHH_1"/>
</dbReference>
<dbReference type="InterPro" id="IPR043128">
    <property type="entry name" value="Rev_trsase/Diguanyl_cyclase"/>
</dbReference>
<dbReference type="InterPro" id="IPR001126">
    <property type="entry name" value="UmuC"/>
</dbReference>
<dbReference type="NCBIfam" id="NF002677">
    <property type="entry name" value="PRK02406.1"/>
    <property type="match status" value="1"/>
</dbReference>
<dbReference type="PANTHER" id="PTHR11076:SF33">
    <property type="entry name" value="DNA POLYMERASE KAPPA"/>
    <property type="match status" value="1"/>
</dbReference>
<dbReference type="PANTHER" id="PTHR11076">
    <property type="entry name" value="DNA REPAIR POLYMERASE UMUC / TRANSFERASE FAMILY MEMBER"/>
    <property type="match status" value="1"/>
</dbReference>
<dbReference type="Pfam" id="PF00817">
    <property type="entry name" value="IMS"/>
    <property type="match status" value="1"/>
</dbReference>
<dbReference type="Pfam" id="PF11799">
    <property type="entry name" value="IMS_C"/>
    <property type="match status" value="1"/>
</dbReference>
<dbReference type="Pfam" id="PF21999">
    <property type="entry name" value="IMS_HHH_1"/>
    <property type="match status" value="1"/>
</dbReference>
<dbReference type="SUPFAM" id="SSF56672">
    <property type="entry name" value="DNA/RNA polymerases"/>
    <property type="match status" value="1"/>
</dbReference>
<dbReference type="SUPFAM" id="SSF100879">
    <property type="entry name" value="Lesion bypass DNA polymerase (Y-family), little finger domain"/>
    <property type="match status" value="1"/>
</dbReference>
<dbReference type="PROSITE" id="PS50173">
    <property type="entry name" value="UMUC"/>
    <property type="match status" value="1"/>
</dbReference>
<gene>
    <name evidence="1" type="primary">dinB</name>
    <name type="ordered locus">SbBS512_E0228</name>
</gene>
<keyword id="KW-0963">Cytoplasm</keyword>
<keyword id="KW-0227">DNA damage</keyword>
<keyword id="KW-0234">DNA repair</keyword>
<keyword id="KW-0235">DNA replication</keyword>
<keyword id="KW-0238">DNA-binding</keyword>
<keyword id="KW-0239">DNA-directed DNA polymerase</keyword>
<keyword id="KW-0460">Magnesium</keyword>
<keyword id="KW-0479">Metal-binding</keyword>
<keyword id="KW-0515">Mutator protein</keyword>
<keyword id="KW-0548">Nucleotidyltransferase</keyword>
<keyword id="KW-1185">Reference proteome</keyword>
<keyword id="KW-0808">Transferase</keyword>
<comment type="function">
    <text evidence="1">Poorly processive, error-prone DNA polymerase involved in untargeted mutagenesis. Copies undamaged DNA at stalled replication forks, which arise in vivo from mismatched or misaligned primer ends. These misaligned primers can be extended by PolIV. Exhibits no 3'-5' exonuclease (proofreading) activity. May be involved in translesional synthesis, in conjunction with the beta clamp from PolIII.</text>
</comment>
<comment type="catalytic activity">
    <reaction evidence="1">
        <text>DNA(n) + a 2'-deoxyribonucleoside 5'-triphosphate = DNA(n+1) + diphosphate</text>
        <dbReference type="Rhea" id="RHEA:22508"/>
        <dbReference type="Rhea" id="RHEA-COMP:17339"/>
        <dbReference type="Rhea" id="RHEA-COMP:17340"/>
        <dbReference type="ChEBI" id="CHEBI:33019"/>
        <dbReference type="ChEBI" id="CHEBI:61560"/>
        <dbReference type="ChEBI" id="CHEBI:173112"/>
        <dbReference type="EC" id="2.7.7.7"/>
    </reaction>
</comment>
<comment type="cofactor">
    <cofactor evidence="1">
        <name>Mg(2+)</name>
        <dbReference type="ChEBI" id="CHEBI:18420"/>
    </cofactor>
    <text evidence="1">Binds 2 magnesium ions per subunit.</text>
</comment>
<comment type="subunit">
    <text evidence="1">Monomer.</text>
</comment>
<comment type="subcellular location">
    <subcellularLocation>
        <location evidence="1">Cytoplasm</location>
    </subcellularLocation>
</comment>
<comment type="similarity">
    <text evidence="1">Belongs to the DNA polymerase type-Y family.</text>
</comment>
<accession>B2U3S3</accession>
<evidence type="ECO:0000255" key="1">
    <source>
        <dbReference type="HAMAP-Rule" id="MF_01113"/>
    </source>
</evidence>
<organism>
    <name type="scientific">Shigella boydii serotype 18 (strain CDC 3083-94 / BS512)</name>
    <dbReference type="NCBI Taxonomy" id="344609"/>
    <lineage>
        <taxon>Bacteria</taxon>
        <taxon>Pseudomonadati</taxon>
        <taxon>Pseudomonadota</taxon>
        <taxon>Gammaproteobacteria</taxon>
        <taxon>Enterobacterales</taxon>
        <taxon>Enterobacteriaceae</taxon>
        <taxon>Shigella</taxon>
    </lineage>
</organism>